<dbReference type="EC" id="2.3.1.20" evidence="3"/>
<dbReference type="EMBL" id="AL123456">
    <property type="protein sequence ID" value="CCP44526.1"/>
    <property type="molecule type" value="Genomic_DNA"/>
</dbReference>
<dbReference type="PIR" id="A70988">
    <property type="entry name" value="A70988"/>
</dbReference>
<dbReference type="RefSeq" id="NP_216276.1">
    <property type="nucleotide sequence ID" value="NC_000962.3"/>
</dbReference>
<dbReference type="RefSeq" id="WP_010886129.1">
    <property type="nucleotide sequence ID" value="NC_000962.3"/>
</dbReference>
<dbReference type="SMR" id="P9WKB9"/>
<dbReference type="STRING" id="83332.Rv1760"/>
<dbReference type="SwissLipids" id="SLP:000001150"/>
<dbReference type="PaxDb" id="83332-Rv1760"/>
<dbReference type="DNASU" id="885556"/>
<dbReference type="GeneID" id="885556"/>
<dbReference type="KEGG" id="mtu:Rv1760"/>
<dbReference type="KEGG" id="mtv:RVBD_1760"/>
<dbReference type="PATRIC" id="fig|83332.111.peg.1959"/>
<dbReference type="TubercuList" id="Rv1760"/>
<dbReference type="eggNOG" id="COG1020">
    <property type="taxonomic scope" value="Bacteria"/>
</dbReference>
<dbReference type="InParanoid" id="P9WKB9"/>
<dbReference type="OrthoDB" id="9810950at2"/>
<dbReference type="PhylomeDB" id="P9WKB9"/>
<dbReference type="UniPathway" id="UPA00282"/>
<dbReference type="Proteomes" id="UP000001584">
    <property type="component" value="Chromosome"/>
</dbReference>
<dbReference type="GO" id="GO:0005886">
    <property type="term" value="C:plasma membrane"/>
    <property type="evidence" value="ECO:0000318"/>
    <property type="project" value="GO_Central"/>
</dbReference>
<dbReference type="GO" id="GO:0004144">
    <property type="term" value="F:diacylglycerol O-acyltransferase activity"/>
    <property type="evidence" value="ECO:0000314"/>
    <property type="project" value="MTBBASE"/>
</dbReference>
<dbReference type="GO" id="GO:0008374">
    <property type="term" value="F:O-acyltransferase activity"/>
    <property type="evidence" value="ECO:0000318"/>
    <property type="project" value="GO_Central"/>
</dbReference>
<dbReference type="GO" id="GO:0051701">
    <property type="term" value="P:biological process involved in interaction with host"/>
    <property type="evidence" value="ECO:0000318"/>
    <property type="project" value="GO_Central"/>
</dbReference>
<dbReference type="GO" id="GO:0006071">
    <property type="term" value="P:glycerol metabolic process"/>
    <property type="evidence" value="ECO:0007669"/>
    <property type="project" value="UniProtKB-KW"/>
</dbReference>
<dbReference type="GO" id="GO:0045017">
    <property type="term" value="P:glycerolipid biosynthetic process"/>
    <property type="evidence" value="ECO:0000314"/>
    <property type="project" value="MTBBASE"/>
</dbReference>
<dbReference type="GO" id="GO:0001666">
    <property type="term" value="P:response to hypoxia"/>
    <property type="evidence" value="ECO:0000318"/>
    <property type="project" value="GO_Central"/>
</dbReference>
<dbReference type="GO" id="GO:0071731">
    <property type="term" value="P:response to nitric oxide"/>
    <property type="evidence" value="ECO:0000318"/>
    <property type="project" value="GO_Central"/>
</dbReference>
<dbReference type="GO" id="GO:0019432">
    <property type="term" value="P:triglyceride biosynthetic process"/>
    <property type="evidence" value="ECO:0000318"/>
    <property type="project" value="GO_Central"/>
</dbReference>
<dbReference type="FunFam" id="3.30.559.10:FF:000061">
    <property type="entry name" value="Diacylglycerol O-acyltransferase"/>
    <property type="match status" value="1"/>
</dbReference>
<dbReference type="Gene3D" id="3.30.559.10">
    <property type="entry name" value="Chloramphenicol acetyltransferase-like domain"/>
    <property type="match status" value="1"/>
</dbReference>
<dbReference type="InterPro" id="IPR014292">
    <property type="entry name" value="Acyl_transf_WS/DGAT"/>
</dbReference>
<dbReference type="InterPro" id="IPR023213">
    <property type="entry name" value="CAT-like_dom_sf"/>
</dbReference>
<dbReference type="InterPro" id="IPR045034">
    <property type="entry name" value="O-acyltransferase_WSD1-like"/>
</dbReference>
<dbReference type="InterPro" id="IPR009721">
    <property type="entry name" value="O-acyltransferase_WSD1_C"/>
</dbReference>
<dbReference type="InterPro" id="IPR004255">
    <property type="entry name" value="O-acyltransferase_WSD1_N"/>
</dbReference>
<dbReference type="NCBIfam" id="TIGR02946">
    <property type="entry name" value="acyl_WS_DGAT"/>
    <property type="match status" value="1"/>
</dbReference>
<dbReference type="PANTHER" id="PTHR31650">
    <property type="entry name" value="O-ACYLTRANSFERASE (WSD1-LIKE) FAMILY PROTEIN"/>
    <property type="match status" value="1"/>
</dbReference>
<dbReference type="PANTHER" id="PTHR31650:SF1">
    <property type="entry name" value="WAX ESTER SYNTHASE_DIACYLGLYCEROL ACYLTRANSFERASE 4-RELATED"/>
    <property type="match status" value="1"/>
</dbReference>
<dbReference type="Pfam" id="PF06974">
    <property type="entry name" value="WS_DGAT_C"/>
    <property type="match status" value="1"/>
</dbReference>
<dbReference type="Pfam" id="PF03007">
    <property type="entry name" value="WS_DGAT_cat"/>
    <property type="match status" value="1"/>
</dbReference>
<dbReference type="SUPFAM" id="SSF52777">
    <property type="entry name" value="CoA-dependent acyltransferases"/>
    <property type="match status" value="1"/>
</dbReference>
<proteinExistence type="evidence at protein level"/>
<comment type="function">
    <text evidence="1">Catalyzes the terminal and only committed step in triacylglycerol synthesis by using diacylglycerol and fatty acyl CoA as substrates. Required for storage lipid synthesis.</text>
</comment>
<comment type="function">
    <text evidence="3">Upon expression in E.coli functions weakly as a triacylglycerol synthase, making triacylglycerol (TG) from diolein and long-chain fatty acyl-CoA. Has very weak wax synthase activity, incorporating palmityl alcohol into wax esters in the presence of palmitoyl-CoA.</text>
</comment>
<comment type="catalytic activity">
    <reaction evidence="3">
        <text>an acyl-CoA + a 1,2-diacyl-sn-glycerol = a triacyl-sn-glycerol + CoA</text>
        <dbReference type="Rhea" id="RHEA:10868"/>
        <dbReference type="ChEBI" id="CHEBI:17815"/>
        <dbReference type="ChEBI" id="CHEBI:57287"/>
        <dbReference type="ChEBI" id="CHEBI:58342"/>
        <dbReference type="ChEBI" id="CHEBI:64615"/>
        <dbReference type="EC" id="2.3.1.20"/>
    </reaction>
</comment>
<comment type="catalytic activity">
    <reaction evidence="3">
        <text>di-(9Z)-octadecenoylglycerol + (9Z)-octadecenoyl-CoA = 1,2,3-tri-(9Z-octadecenoyl)-glycerol + CoA</text>
        <dbReference type="Rhea" id="RHEA:45780"/>
        <dbReference type="ChEBI" id="CHEBI:53753"/>
        <dbReference type="ChEBI" id="CHEBI:57287"/>
        <dbReference type="ChEBI" id="CHEBI:57387"/>
        <dbReference type="ChEBI" id="CHEBI:75945"/>
    </reaction>
    <physiologicalReaction direction="left-to-right" evidence="3">
        <dbReference type="Rhea" id="RHEA:45781"/>
    </physiologicalReaction>
</comment>
<comment type="pathway">
    <text>Glycerolipid metabolism; triacylglycerol biosynthesis.</text>
</comment>
<comment type="induction">
    <text evidence="3">A possible member of the dormancy regulon. Induced in response to reduced oxygen tension (hypoxia) and low levels of nitric oxide (NO). It is hoped that this regulon will give insight into the latent, or dormant phase of infection.</text>
</comment>
<comment type="similarity">
    <text evidence="4">Belongs to the long-chain O-acyltransferase family.</text>
</comment>
<reference key="1">
    <citation type="journal article" date="1998" name="Nature">
        <title>Deciphering the biology of Mycobacterium tuberculosis from the complete genome sequence.</title>
        <authorList>
            <person name="Cole S.T."/>
            <person name="Brosch R."/>
            <person name="Parkhill J."/>
            <person name="Garnier T."/>
            <person name="Churcher C.M."/>
            <person name="Harris D.E."/>
            <person name="Gordon S.V."/>
            <person name="Eiglmeier K."/>
            <person name="Gas S."/>
            <person name="Barry C.E. III"/>
            <person name="Tekaia F."/>
            <person name="Badcock K."/>
            <person name="Basham D."/>
            <person name="Brown D."/>
            <person name="Chillingworth T."/>
            <person name="Connor R."/>
            <person name="Davies R.M."/>
            <person name="Devlin K."/>
            <person name="Feltwell T."/>
            <person name="Gentles S."/>
            <person name="Hamlin N."/>
            <person name="Holroyd S."/>
            <person name="Hornsby T."/>
            <person name="Jagels K."/>
            <person name="Krogh A."/>
            <person name="McLean J."/>
            <person name="Moule S."/>
            <person name="Murphy L.D."/>
            <person name="Oliver S."/>
            <person name="Osborne J."/>
            <person name="Quail M.A."/>
            <person name="Rajandream M.A."/>
            <person name="Rogers J."/>
            <person name="Rutter S."/>
            <person name="Seeger K."/>
            <person name="Skelton S."/>
            <person name="Squares S."/>
            <person name="Squares R."/>
            <person name="Sulston J.E."/>
            <person name="Taylor K."/>
            <person name="Whitehead S."/>
            <person name="Barrell B.G."/>
        </authorList>
    </citation>
    <scope>NUCLEOTIDE SEQUENCE [LARGE SCALE GENOMIC DNA]</scope>
    <source>
        <strain>ATCC 25618 / H37Rv</strain>
    </source>
</reference>
<reference key="2">
    <citation type="journal article" date="2004" name="J. Bacteriol.">
        <title>Induction of a novel class of diacylglycerol acyltransferases and triacylglycerol accumulation in Mycobacterium tuberculosis as it goes into a dormancy-like state in culture.</title>
        <authorList>
            <person name="Daniel J."/>
            <person name="Deb C."/>
            <person name="Dubey V.S."/>
            <person name="Sirakova T.D."/>
            <person name="Abomoelak B."/>
            <person name="Morbidoni H.R."/>
            <person name="Kolattukudy P.E."/>
        </authorList>
    </citation>
    <scope>EXPRESSION IN E.COLI</scope>
    <scope>CATALYTIC ACTIVITY</scope>
    <scope>INDUCTION BY HYPOXIA AND BY NITRIC OXIDE (NO)</scope>
    <source>
        <strain>ATCC 25618 / H37Rv</strain>
    </source>
</reference>
<reference key="3">
    <citation type="journal article" date="2011" name="Mol. Cell. Proteomics">
        <title>Proteogenomic analysis of Mycobacterium tuberculosis by high resolution mass spectrometry.</title>
        <authorList>
            <person name="Kelkar D.S."/>
            <person name="Kumar D."/>
            <person name="Kumar P."/>
            <person name="Balakrishnan L."/>
            <person name="Muthusamy B."/>
            <person name="Yadav A.K."/>
            <person name="Shrivastava P."/>
            <person name="Marimuthu A."/>
            <person name="Anand S."/>
            <person name="Sundaram H."/>
            <person name="Kingsbury R."/>
            <person name="Harsha H.C."/>
            <person name="Nair B."/>
            <person name="Prasad T.S."/>
            <person name="Chauhan D.S."/>
            <person name="Katoch K."/>
            <person name="Katoch V.M."/>
            <person name="Kumar P."/>
            <person name="Chaerkady R."/>
            <person name="Ramachandran S."/>
            <person name="Dash D."/>
            <person name="Pandey A."/>
        </authorList>
    </citation>
    <scope>IDENTIFICATION BY MASS SPECTROMETRY [LARGE SCALE ANALYSIS]</scope>
    <source>
        <strain>ATCC 25618 / H37Rv</strain>
    </source>
</reference>
<gene>
    <name type="ordered locus">Rv1760</name>
    <name type="ORF">MTCY28.26</name>
</gene>
<accession>P9WKB9</accession>
<accession>L0T7L6</accession>
<accession>O06795</accession>
<protein>
    <recommendedName>
        <fullName>Putative diacyglycerol O-acyltransferase Rv1760</fullName>
        <ecNumber evidence="3">2.3.1.20</ecNumber>
    </recommendedName>
    <alternativeName>
        <fullName>Putative triacylglycerol synthase Rv1760</fullName>
    </alternativeName>
</protein>
<sequence>MPRGCAGARFACNACLNFLAGLGISEPISPGWAAMERLSGLDAFFLYMETPSQPLNVCCVLELDTSTMPGGYTYGRFHAALEKYVKAAPEFRMKLADTELNLDHPVWVDDDNFQIRHHLRRVAMPAPGGRRELAEICGYIAGLPLDRDRPLWEMWVIEGGARSDTVAVMLKVHHAVVDGVAGANLLSHLCSLQPDAPAPQPVRGTGGGNVLQIAASGLEGFASRPVRLATVVPATVLTLVRTLLRAREGRTMAAPFSAPPTPFNGPLGRLRNIAYTQLDMRDVKRVKDRFGVTINDVVVALCAGALRRFLLEHGVLPEAPLVATVPVSVHDKSDRPGRNQATWMFCRVPSQISDPAQRIRTIAAGNTVAKDHAAAIGPTLLHDWIQFGGSTMFGAAMRILPHISITHSPAYNLILSNVPGPQAQLYFLGCRMDSMFPLGPLLGNAGLNITVMSLNGELGVGIVSCPDLLPDLWGVADGFPEALKELLECSDDQPEGSNHQDS</sequence>
<keyword id="KW-0012">Acyltransferase</keyword>
<keyword id="KW-0319">Glycerol metabolism</keyword>
<keyword id="KW-0444">Lipid biosynthesis</keyword>
<keyword id="KW-0443">Lipid metabolism</keyword>
<keyword id="KW-1185">Reference proteome</keyword>
<keyword id="KW-0808">Transferase</keyword>
<feature type="chain" id="PRO_0000222909" description="Putative diacyglycerol O-acyltransferase Rv1760">
    <location>
        <begin position="1"/>
        <end position="502"/>
    </location>
</feature>
<feature type="active site" description="Proton acceptor" evidence="2">
    <location>
        <position position="174"/>
    </location>
</feature>
<name>Y1760_MYCTU</name>
<organism>
    <name type="scientific">Mycobacterium tuberculosis (strain ATCC 25618 / H37Rv)</name>
    <dbReference type="NCBI Taxonomy" id="83332"/>
    <lineage>
        <taxon>Bacteria</taxon>
        <taxon>Bacillati</taxon>
        <taxon>Actinomycetota</taxon>
        <taxon>Actinomycetes</taxon>
        <taxon>Mycobacteriales</taxon>
        <taxon>Mycobacteriaceae</taxon>
        <taxon>Mycobacterium</taxon>
        <taxon>Mycobacterium tuberculosis complex</taxon>
    </lineage>
</organism>
<evidence type="ECO:0000250" key="1">
    <source>
        <dbReference type="UniProtKB" id="P9WKC9"/>
    </source>
</evidence>
<evidence type="ECO:0000255" key="2"/>
<evidence type="ECO:0000269" key="3">
    <source>
    </source>
</evidence>
<evidence type="ECO:0000305" key="4"/>